<organism>
    <name type="scientific">Aeropyrum pernix (strain ATCC 700893 / DSM 11879 / JCM 9820 / NBRC 100138 / K1)</name>
    <dbReference type="NCBI Taxonomy" id="272557"/>
    <lineage>
        <taxon>Archaea</taxon>
        <taxon>Thermoproteota</taxon>
        <taxon>Thermoprotei</taxon>
        <taxon>Desulfurococcales</taxon>
        <taxon>Desulfurococcaceae</taxon>
        <taxon>Aeropyrum</taxon>
    </lineage>
</organism>
<evidence type="ECO:0000255" key="1"/>
<evidence type="ECO:0000305" key="2"/>
<evidence type="ECO:0007829" key="3">
    <source>
        <dbReference type="PDB" id="7TXI"/>
    </source>
</evidence>
<reference key="1">
    <citation type="journal article" date="1999" name="DNA Res.">
        <title>Complete genome sequence of an aerobic hyper-thermophilic crenarchaeon, Aeropyrum pernix K1.</title>
        <authorList>
            <person name="Kawarabayasi Y."/>
            <person name="Hino Y."/>
            <person name="Horikawa H."/>
            <person name="Yamazaki S."/>
            <person name="Haikawa Y."/>
            <person name="Jin-no K."/>
            <person name="Takahashi M."/>
            <person name="Sekine M."/>
            <person name="Baba S."/>
            <person name="Ankai A."/>
            <person name="Kosugi H."/>
            <person name="Hosoyama A."/>
            <person name="Fukui S."/>
            <person name="Nagai Y."/>
            <person name="Nishijima K."/>
            <person name="Nakazawa H."/>
            <person name="Takamiya M."/>
            <person name="Masuda S."/>
            <person name="Funahashi T."/>
            <person name="Tanaka T."/>
            <person name="Kudoh Y."/>
            <person name="Yamazaki J."/>
            <person name="Kushida N."/>
            <person name="Oguchi A."/>
            <person name="Aoki K."/>
            <person name="Kubota K."/>
            <person name="Nakamura Y."/>
            <person name="Nomura N."/>
            <person name="Sako Y."/>
            <person name="Kikuchi H."/>
        </authorList>
    </citation>
    <scope>NUCLEOTIDE SEQUENCE [LARGE SCALE GENOMIC DNA]</scope>
    <source>
        <strain>ATCC 700893 / DSM 11879 / JCM 9820 / NBRC 100138 / K1</strain>
    </source>
</reference>
<dbReference type="EMBL" id="BA000002">
    <property type="protein sequence ID" value="BAA80910.1"/>
    <property type="molecule type" value="Genomic_DNA"/>
</dbReference>
<dbReference type="PIR" id="A72578">
    <property type="entry name" value="A72578"/>
</dbReference>
<dbReference type="RefSeq" id="WP_010866674.1">
    <property type="nucleotide sequence ID" value="NC_000854.2"/>
</dbReference>
<dbReference type="PDB" id="7TXI">
    <property type="method" value="EM"/>
    <property type="resolution" value="3.50 A"/>
    <property type="chains" value="A=1-203"/>
</dbReference>
<dbReference type="PDBsum" id="7TXI"/>
<dbReference type="EMDB" id="EMD-26158"/>
<dbReference type="SMR" id="Q9YAN8"/>
<dbReference type="STRING" id="272557.APE_1905"/>
<dbReference type="EnsemblBacteria" id="BAA80910">
    <property type="protein sequence ID" value="BAA80910"/>
    <property type="gene ID" value="APE_1905"/>
</dbReference>
<dbReference type="GeneID" id="1446333"/>
<dbReference type="KEGG" id="ape:APE_1905"/>
<dbReference type="eggNOG" id="arCOG01829">
    <property type="taxonomic scope" value="Archaea"/>
</dbReference>
<dbReference type="Proteomes" id="UP000002518">
    <property type="component" value="Chromosome"/>
</dbReference>
<dbReference type="GO" id="GO:0097589">
    <property type="term" value="C:archaeal-type flagellum"/>
    <property type="evidence" value="ECO:0007669"/>
    <property type="project" value="UniProtKB-SubCell"/>
</dbReference>
<dbReference type="GO" id="GO:0005198">
    <property type="term" value="F:structural molecule activity"/>
    <property type="evidence" value="ECO:0007669"/>
    <property type="project" value="InterPro"/>
</dbReference>
<dbReference type="GO" id="GO:0097588">
    <property type="term" value="P:archaeal or bacterial-type flagellum-dependent cell motility"/>
    <property type="evidence" value="ECO:0007669"/>
    <property type="project" value="InterPro"/>
</dbReference>
<dbReference type="InterPro" id="IPR013373">
    <property type="entry name" value="Flagellin/pilin_N_arc"/>
</dbReference>
<dbReference type="InterPro" id="IPR002774">
    <property type="entry name" value="Flagellin_arc"/>
</dbReference>
<dbReference type="NCBIfam" id="TIGR02537">
    <property type="entry name" value="arch_flag_Nterm"/>
    <property type="match status" value="1"/>
</dbReference>
<dbReference type="PANTHER" id="PTHR35903">
    <property type="entry name" value="FLAGELLIN B1"/>
    <property type="match status" value="1"/>
</dbReference>
<dbReference type="PANTHER" id="PTHR35903:SF1">
    <property type="entry name" value="FLAGELLIN B1"/>
    <property type="match status" value="1"/>
</dbReference>
<dbReference type="Pfam" id="PF01917">
    <property type="entry name" value="Arch_flagellin"/>
    <property type="match status" value="1"/>
</dbReference>
<feature type="propeptide" id="PRO_0000009355" evidence="1">
    <location>
        <begin position="1"/>
        <end position="6"/>
    </location>
</feature>
<feature type="chain" id="PRO_0000009356" description="Probable flagellin 1">
    <location>
        <begin position="7"/>
        <end position="203"/>
    </location>
</feature>
<feature type="helix" evidence="3">
    <location>
        <begin position="9"/>
        <end position="52"/>
    </location>
</feature>
<feature type="strand" evidence="3">
    <location>
        <begin position="63"/>
        <end position="67"/>
    </location>
</feature>
<feature type="strand" evidence="3">
    <location>
        <begin position="70"/>
        <end position="79"/>
    </location>
</feature>
<feature type="turn" evidence="3">
    <location>
        <begin position="91"/>
        <end position="93"/>
    </location>
</feature>
<feature type="strand" evidence="3">
    <location>
        <begin position="95"/>
        <end position="99"/>
    </location>
</feature>
<feature type="strand" evidence="3">
    <location>
        <begin position="104"/>
        <end position="106"/>
    </location>
</feature>
<feature type="strand" evidence="3">
    <location>
        <begin position="109"/>
        <end position="114"/>
    </location>
</feature>
<feature type="helix" evidence="3">
    <location>
        <begin position="123"/>
        <end position="129"/>
    </location>
</feature>
<feature type="strand" evidence="3">
    <location>
        <begin position="136"/>
        <end position="143"/>
    </location>
</feature>
<feature type="strand" evidence="3">
    <location>
        <begin position="148"/>
        <end position="150"/>
    </location>
</feature>
<feature type="strand" evidence="3">
    <location>
        <begin position="155"/>
        <end position="161"/>
    </location>
</feature>
<feature type="strand" evidence="3">
    <location>
        <begin position="171"/>
        <end position="177"/>
    </location>
</feature>
<feature type="strand" evidence="3">
    <location>
        <begin position="179"/>
        <end position="181"/>
    </location>
</feature>
<feature type="strand" evidence="3">
    <location>
        <begin position="184"/>
        <end position="189"/>
    </location>
</feature>
<feature type="strand" evidence="3">
    <location>
        <begin position="196"/>
        <end position="201"/>
    </location>
</feature>
<accession>Q9YAN8</accession>
<keyword id="KW-0002">3D-structure</keyword>
<keyword id="KW-0974">Archaeal flagellum</keyword>
<keyword id="KW-1185">Reference proteome</keyword>
<comment type="function">
    <text>Flagellin is the subunit protein which polymerizes to form the filaments of archaeal flagella.</text>
</comment>
<comment type="subcellular location">
    <subcellularLocation>
        <location>Archaeal flagellum</location>
    </subcellularLocation>
</comment>
<comment type="similarity">
    <text evidence="2">Belongs to the archaeal flagellin family.</text>
</comment>
<gene>
    <name type="primary">flaB1</name>
    <name type="ordered locus">APE_1905</name>
</gene>
<proteinExistence type="evidence at protein level"/>
<sequence>MRRRRGIVGIEAAIVLIAFVIVAAALAFVALNMGLFTTQKSKEVMQRGLEEATSALEVDGSVIANVTSGSVDAIAIPIKVSPGREGVDMSVDKTTVRVMLPSKFYENAYCGVFDGSSLSDSKLSTITSSIACTTGWAYLVIFNGDGDNVLELGEKGLLVLELPTPLNSYEEFKVEVRPVQGAALTVERIVPASLPTGGAVSLG</sequence>
<protein>
    <recommendedName>
        <fullName>Probable flagellin 1</fullName>
    </recommendedName>
</protein>
<name>FLAB1_AERPE</name>